<feature type="chain" id="PRO_1000013569" description="Protein RnfH">
    <location>
        <begin position="1"/>
        <end position="110"/>
    </location>
</feature>
<feature type="region of interest" description="Disordered" evidence="2">
    <location>
        <begin position="90"/>
        <end position="110"/>
    </location>
</feature>
<gene>
    <name evidence="1" type="primary">rnfH</name>
    <name type="ordered locus">BMA10229_A3282</name>
</gene>
<evidence type="ECO:0000255" key="1">
    <source>
        <dbReference type="HAMAP-Rule" id="MF_00460"/>
    </source>
</evidence>
<evidence type="ECO:0000256" key="2">
    <source>
        <dbReference type="SAM" id="MobiDB-lite"/>
    </source>
</evidence>
<protein>
    <recommendedName>
        <fullName evidence="1">Protein RnfH</fullName>
    </recommendedName>
</protein>
<reference key="1">
    <citation type="journal article" date="2010" name="Genome Biol. Evol.">
        <title>Continuing evolution of Burkholderia mallei through genome reduction and large-scale rearrangements.</title>
        <authorList>
            <person name="Losada L."/>
            <person name="Ronning C.M."/>
            <person name="DeShazer D."/>
            <person name="Woods D."/>
            <person name="Fedorova N."/>
            <person name="Kim H.S."/>
            <person name="Shabalina S.A."/>
            <person name="Pearson T.R."/>
            <person name="Brinkac L."/>
            <person name="Tan P."/>
            <person name="Nandi T."/>
            <person name="Crabtree J."/>
            <person name="Badger J."/>
            <person name="Beckstrom-Sternberg S."/>
            <person name="Saqib M."/>
            <person name="Schutzer S.E."/>
            <person name="Keim P."/>
            <person name="Nierman W.C."/>
        </authorList>
    </citation>
    <scope>NUCLEOTIDE SEQUENCE [LARGE SCALE GENOMIC DNA]</scope>
    <source>
        <strain>NCTC 10229</strain>
    </source>
</reference>
<comment type="similarity">
    <text evidence="1">Belongs to the UPF0125 (RnfH) family.</text>
</comment>
<sequence length="110" mass="12013">MTRMPKVQVCYALPERQTLVAVDVPAGASVRDAIAASGVLALHPDIDASALKTGIFGKLAPLDAPVADGDRVEIYRPLIVDPKLARQRRVDKTRREGSIEGRKWLPKDSR</sequence>
<name>RNFH_BURM9</name>
<dbReference type="EMBL" id="CP000546">
    <property type="protein sequence ID" value="ABN02786.1"/>
    <property type="molecule type" value="Genomic_DNA"/>
</dbReference>
<dbReference type="SMR" id="A2SB99"/>
<dbReference type="KEGG" id="bml:BMA10229_A3282"/>
<dbReference type="HOGENOM" id="CLU_150721_0_0_4"/>
<dbReference type="Proteomes" id="UP000002283">
    <property type="component" value="Chromosome I"/>
</dbReference>
<dbReference type="Gene3D" id="3.10.20.280">
    <property type="entry name" value="RnfH-like"/>
    <property type="match status" value="1"/>
</dbReference>
<dbReference type="HAMAP" id="MF_00460">
    <property type="entry name" value="UPF0125_RnfH"/>
    <property type="match status" value="1"/>
</dbReference>
<dbReference type="InterPro" id="IPR016155">
    <property type="entry name" value="Mopterin_synth/thiamin_S_b"/>
</dbReference>
<dbReference type="InterPro" id="IPR005346">
    <property type="entry name" value="RnfH"/>
</dbReference>
<dbReference type="InterPro" id="IPR037021">
    <property type="entry name" value="RnfH_sf"/>
</dbReference>
<dbReference type="NCBIfam" id="NF002490">
    <property type="entry name" value="PRK01777.1"/>
    <property type="match status" value="1"/>
</dbReference>
<dbReference type="PANTHER" id="PTHR37483">
    <property type="entry name" value="UPF0125 PROTEIN RATB"/>
    <property type="match status" value="1"/>
</dbReference>
<dbReference type="PANTHER" id="PTHR37483:SF1">
    <property type="entry name" value="UPF0125 PROTEIN RATB"/>
    <property type="match status" value="1"/>
</dbReference>
<dbReference type="Pfam" id="PF03658">
    <property type="entry name" value="Ub-RnfH"/>
    <property type="match status" value="1"/>
</dbReference>
<dbReference type="SUPFAM" id="SSF54285">
    <property type="entry name" value="MoaD/ThiS"/>
    <property type="match status" value="1"/>
</dbReference>
<proteinExistence type="inferred from homology"/>
<organism>
    <name type="scientific">Burkholderia mallei (strain NCTC 10229)</name>
    <dbReference type="NCBI Taxonomy" id="412022"/>
    <lineage>
        <taxon>Bacteria</taxon>
        <taxon>Pseudomonadati</taxon>
        <taxon>Pseudomonadota</taxon>
        <taxon>Betaproteobacteria</taxon>
        <taxon>Burkholderiales</taxon>
        <taxon>Burkholderiaceae</taxon>
        <taxon>Burkholderia</taxon>
        <taxon>pseudomallei group</taxon>
    </lineage>
</organism>
<accession>A2SB99</accession>